<feature type="chain" id="PRO_0000430244" description="CRISPR-associated protein Csy2">
    <location>
        <begin position="1"/>
        <end position="310"/>
    </location>
</feature>
<comment type="function">
    <text evidence="3">CRISPR (clustered regularly interspaced short palindromic repeat) is an adaptive immune system that provides protection against mobile genetic elements (viruses, transposable elements and conjugative plasmids). CRISPR clusters contain sequences complementary to antecedent mobile elements and target invading nucleic acids. CRISPR clusters are transcribed and processed into CRISPR RNA (crRNA).</text>
</comment>
<comment type="subunit">
    <text evidence="2">Interacts directly with Cys1; part of the probable Csy ribonucleoprotein complex with cys1, cys2, csy3, cas6f and crRNA.</text>
</comment>
<comment type="induction">
    <text evidence="1">Expressed in late exponential phase (other phases not tested); part of a large cas-CRISPR3 polycistronic operon.</text>
</comment>
<comment type="biotechnology">
    <text evidence="3">If the spacer DNA has a perfect match in the chromosome then toxicity results. Suppression of the toxic effects occurs via mutations in the CRISPR/Cas machinery, or via target deletion, which might contribute to genome plasticity. This CRISPR/Cas system can be used to remove genomic islands, and possibly other genomic regions.</text>
</comment>
<comment type="similarity">
    <text evidence="4">Belongs to the CRISPR-associated Csy2 family.</text>
</comment>
<evidence type="ECO:0000269" key="1">
    <source>
    </source>
</evidence>
<evidence type="ECO:0000269" key="2">
    <source>
    </source>
</evidence>
<evidence type="ECO:0000269" key="3">
    <source>
    </source>
</evidence>
<evidence type="ECO:0000305" key="4"/>
<keyword id="KW-0051">Antiviral defense</keyword>
<keyword id="KW-1185">Reference proteome</keyword>
<reference key="1">
    <citation type="journal article" date="2004" name="Proc. Natl. Acad. Sci. U.S.A.">
        <title>Genome sequence of the enterobacterial phytopathogen Erwinia carotovora subsp. atroseptica and characterization of virulence factors.</title>
        <authorList>
            <person name="Bell K.S."/>
            <person name="Sebaihia M."/>
            <person name="Pritchard L."/>
            <person name="Holden M.T.G."/>
            <person name="Hyman L.J."/>
            <person name="Holeva M.C."/>
            <person name="Thomson N.R."/>
            <person name="Bentley S.D."/>
            <person name="Churcher L.J.C."/>
            <person name="Mungall K."/>
            <person name="Atkin R."/>
            <person name="Bason N."/>
            <person name="Brooks K."/>
            <person name="Chillingworth T."/>
            <person name="Clark K."/>
            <person name="Doggett J."/>
            <person name="Fraser A."/>
            <person name="Hance Z."/>
            <person name="Hauser H."/>
            <person name="Jagels K."/>
            <person name="Moule S."/>
            <person name="Norbertczak H."/>
            <person name="Ormond D."/>
            <person name="Price C."/>
            <person name="Quail M.A."/>
            <person name="Sanders M."/>
            <person name="Walker D."/>
            <person name="Whitehead S."/>
            <person name="Salmond G.P.C."/>
            <person name="Birch P.R.J."/>
            <person name="Parkhill J."/>
            <person name="Toth I.K."/>
        </authorList>
    </citation>
    <scope>NUCLEOTIDE SEQUENCE [LARGE SCALE GENOMIC DNA]</scope>
    <source>
        <strain>SCRI 1043 / ATCC BAA-672</strain>
    </source>
</reference>
<reference key="2">
    <citation type="journal article" date="2011" name="RNA Biol.">
        <title>Csy4 is responsible for CRISPR RNA processing in Pectobacterium atrosepticum.</title>
        <authorList>
            <person name="Przybilski R."/>
            <person name="Richter C."/>
            <person name="Gristwood T."/>
            <person name="Clulow J.S."/>
            <person name="Vercoe R.B."/>
            <person name="Fineran P.C."/>
        </authorList>
    </citation>
    <scope>INDUCTION</scope>
    <scope>OPERON STRUCTURE</scope>
    <source>
        <strain>SCRI 1043 / ATCC BAA-672</strain>
    </source>
</reference>
<reference key="3">
    <citation type="journal article" date="2012" name="PLoS ONE">
        <title>In vivo protein interactions and complex formation in the Pectobacterium atrosepticum subtype I-F CRISPR/Cas System.</title>
        <authorList>
            <person name="Richter C."/>
            <person name="Gristwood T."/>
            <person name="Clulow J.S."/>
            <person name="Fineran P.C."/>
        </authorList>
    </citation>
    <scope>IDENTIFICATION BY MASS SPECTROMETRY</scope>
    <scope>INTERACTION WITH CSY1</scope>
    <scope>SUBUNIT</scope>
    <source>
        <strain>SCRI 1043 / ATCC BAA-672</strain>
    </source>
</reference>
<reference key="4">
    <citation type="journal article" date="2013" name="PLoS Genet.">
        <title>Cytotoxic chromosomal targeting by CRISPR/Cas systems can reshape bacterial genomes and expel or remodel pathogenicity islands.</title>
        <authorList>
            <person name="Vercoe R.B."/>
            <person name="Chang J.T."/>
            <person name="Dy R.L."/>
            <person name="Taylor C."/>
            <person name="Gristwood T."/>
            <person name="Clulow J.S."/>
            <person name="Richter C."/>
            <person name="Przybilski R."/>
            <person name="Pitman A.R."/>
            <person name="Fineran P.C."/>
        </authorList>
    </citation>
    <scope>FUNCTION</scope>
    <scope>BIOTECHNOLOGY</scope>
    <source>
        <strain>SCRI 1043 / ATCC BAA-672</strain>
    </source>
</reference>
<sequence length="310" mass="34860">MSTLIILRRIQVENANAIAGLTYGFPAITHFLGFTHALSRKLQASHGLTLEGCGVVSHQHQLHAYGSSWERSFALTRNPLTKEAKTAAFNEEGRMHMTVSLLIRCDGQIPADTTALCEHLKQQAQCQRLAGGTVIDIERVTVQSLPVDEAETRGVMRRLLPGFVLRDRTSLLHRHFQTLQQAKPQAEMIDAWLDFAALKMQAERDPSDETVQWKYLPKPGDGGFLTPLMIGYRAISPLYAPGEVDKTRDPHTPFCFAEAAYGIGEWQGAHRISDISQILWEYDYQNGDYHCRQVADTHSVAEDTSYEFDY</sequence>
<name>CSY2_PECAS</name>
<proteinExistence type="evidence at protein level"/>
<accession>Q6D0W7</accession>
<dbReference type="EMBL" id="BX950851">
    <property type="protein sequence ID" value="CAG76580.1"/>
    <property type="molecule type" value="Genomic_DNA"/>
</dbReference>
<dbReference type="RefSeq" id="WP_011095182.1">
    <property type="nucleotide sequence ID" value="NC_004547.2"/>
</dbReference>
<dbReference type="SMR" id="Q6D0W7"/>
<dbReference type="STRING" id="218491.ECA3682"/>
<dbReference type="GeneID" id="57210352"/>
<dbReference type="KEGG" id="eca:ECA3682"/>
<dbReference type="PATRIC" id="fig|218491.5.peg.3734"/>
<dbReference type="eggNOG" id="ENOG502Z9HE">
    <property type="taxonomic scope" value="Bacteria"/>
</dbReference>
<dbReference type="HOGENOM" id="CLU_073578_0_0_6"/>
<dbReference type="OrthoDB" id="1550641at2"/>
<dbReference type="Proteomes" id="UP000007966">
    <property type="component" value="Chromosome"/>
</dbReference>
<dbReference type="GO" id="GO:0051607">
    <property type="term" value="P:defense response to virus"/>
    <property type="evidence" value="ECO:0007669"/>
    <property type="project" value="UniProtKB-KW"/>
</dbReference>
<dbReference type="CDD" id="cd09676">
    <property type="entry name" value="Csy2_I-F"/>
    <property type="match status" value="1"/>
</dbReference>
<dbReference type="InterPro" id="IPR013398">
    <property type="entry name" value="CRISPR-assoc_prot_Csy2"/>
</dbReference>
<dbReference type="NCBIfam" id="TIGR02565">
    <property type="entry name" value="cas_Csy2"/>
    <property type="match status" value="1"/>
</dbReference>
<dbReference type="Pfam" id="PF09614">
    <property type="entry name" value="Cas_Csy2"/>
    <property type="match status" value="1"/>
</dbReference>
<gene>
    <name type="primary">csy2</name>
    <name type="ordered locus">ECA3682</name>
</gene>
<protein>
    <recommendedName>
        <fullName>CRISPR-associated protein Csy2</fullName>
    </recommendedName>
</protein>
<organism>
    <name type="scientific">Pectobacterium atrosepticum (strain SCRI 1043 / ATCC BAA-672)</name>
    <name type="common">Erwinia carotovora subsp. atroseptica</name>
    <dbReference type="NCBI Taxonomy" id="218491"/>
    <lineage>
        <taxon>Bacteria</taxon>
        <taxon>Pseudomonadati</taxon>
        <taxon>Pseudomonadota</taxon>
        <taxon>Gammaproteobacteria</taxon>
        <taxon>Enterobacterales</taxon>
        <taxon>Pectobacteriaceae</taxon>
        <taxon>Pectobacterium</taxon>
    </lineage>
</organism>